<evidence type="ECO:0000250" key="1">
    <source>
        <dbReference type="UniProtKB" id="Q08AE8"/>
    </source>
</evidence>
<evidence type="ECO:0000250" key="2">
    <source>
        <dbReference type="UniProtKB" id="Q52KF3"/>
    </source>
</evidence>
<evidence type="ECO:0000250" key="3">
    <source>
        <dbReference type="UniProtKB" id="Q9U1K1"/>
    </source>
</evidence>
<evidence type="ECO:0000255" key="4"/>
<evidence type="ECO:0000255" key="5">
    <source>
        <dbReference type="PROSITE-ProRule" id="PRU00709"/>
    </source>
</evidence>
<evidence type="ECO:0000256" key="6">
    <source>
        <dbReference type="SAM" id="MobiDB-lite"/>
    </source>
</evidence>
<evidence type="ECO:0000305" key="7"/>
<evidence type="ECO:0000312" key="8">
    <source>
        <dbReference type="EMBL" id="BAE01117.1"/>
    </source>
</evidence>
<reference evidence="8" key="1">
    <citation type="submission" date="2005-06" db="EMBL/GenBank/DDBJ databases">
        <title>DNA sequences of macaque genes expressed in brain or testis and its evolutionary implications.</title>
        <authorList>
            <consortium name="International consortium for macaque cDNA sequencing and analysis"/>
        </authorList>
    </citation>
    <scope>NUCLEOTIDE SEQUENCE [LARGE SCALE MRNA]</scope>
    <source>
        <tissue>Testis</tissue>
    </source>
</reference>
<accession>Q4R707</accession>
<feature type="chain" id="PRO_0000309570" description="Protein spire homolog 1">
    <location>
        <begin position="1"/>
        <end position="584"/>
    </location>
</feature>
<feature type="domain" description="KIND" evidence="5">
    <location>
        <begin position="1"/>
        <end position="73"/>
    </location>
</feature>
<feature type="domain" description="WH2 1" evidence="4">
    <location>
        <begin position="147"/>
        <end position="165"/>
    </location>
</feature>
<feature type="domain" description="WH2 2" evidence="4">
    <location>
        <begin position="211"/>
        <end position="228"/>
    </location>
</feature>
<feature type="region of interest" description="Disordered" evidence="6">
    <location>
        <begin position="1"/>
        <end position="30"/>
    </location>
</feature>
<feature type="region of interest" description="Disordered" evidence="6">
    <location>
        <begin position="224"/>
        <end position="366"/>
    </location>
</feature>
<feature type="region of interest" description="Spir-box">
    <location>
        <begin position="384"/>
        <end position="404"/>
    </location>
</feature>
<feature type="coiled-coil region" evidence="4">
    <location>
        <begin position="71"/>
        <end position="99"/>
    </location>
</feature>
<feature type="compositionally biased region" description="Acidic residues" evidence="6">
    <location>
        <begin position="9"/>
        <end position="28"/>
    </location>
</feature>
<feature type="compositionally biased region" description="Basic and acidic residues" evidence="6">
    <location>
        <begin position="224"/>
        <end position="238"/>
    </location>
</feature>
<feature type="compositionally biased region" description="Polar residues" evidence="6">
    <location>
        <begin position="242"/>
        <end position="272"/>
    </location>
</feature>
<feature type="compositionally biased region" description="Low complexity" evidence="6">
    <location>
        <begin position="302"/>
        <end position="320"/>
    </location>
</feature>
<feature type="compositionally biased region" description="Basic and acidic residues" evidence="6">
    <location>
        <begin position="340"/>
        <end position="356"/>
    </location>
</feature>
<feature type="compositionally biased region" description="Polar residues" evidence="6">
    <location>
        <begin position="357"/>
        <end position="366"/>
    </location>
</feature>
<feature type="modified residue" description="Phosphoserine" evidence="1">
    <location>
        <position position="229"/>
    </location>
</feature>
<feature type="modified residue" description="Phosphoserine" evidence="1">
    <location>
        <position position="292"/>
    </location>
</feature>
<feature type="modified residue" description="Phosphoserine" evidence="1">
    <location>
        <position position="293"/>
    </location>
</feature>
<feature type="modified residue" description="Phosphoserine" evidence="1">
    <location>
        <position position="295"/>
    </location>
</feature>
<feature type="modified residue" description="Phosphothreonine" evidence="1">
    <location>
        <position position="337"/>
    </location>
</feature>
<feature type="modified residue" description="Phosphoserine" evidence="1">
    <location>
        <position position="506"/>
    </location>
</feature>
<feature type="modified residue" description="Phosphoserine" evidence="2">
    <location>
        <position position="510"/>
    </location>
</feature>
<feature type="modified residue" description="Phosphoserine" evidence="2">
    <location>
        <position position="563"/>
    </location>
</feature>
<keyword id="KW-0009">Actin-binding</keyword>
<keyword id="KW-1003">Cell membrane</keyword>
<keyword id="KW-0175">Coiled coil</keyword>
<keyword id="KW-0963">Cytoplasm</keyword>
<keyword id="KW-0968">Cytoplasmic vesicle</keyword>
<keyword id="KW-0206">Cytoskeleton</keyword>
<keyword id="KW-0472">Membrane</keyword>
<keyword id="KW-0597">Phosphoprotein</keyword>
<keyword id="KW-0653">Protein transport</keyword>
<keyword id="KW-1185">Reference proteome</keyword>
<keyword id="KW-0677">Repeat</keyword>
<keyword id="KW-0813">Transport</keyword>
<protein>
    <recommendedName>
        <fullName>Protein spire homolog 1</fullName>
    </recommendedName>
</protein>
<proteinExistence type="evidence at transcript level"/>
<sequence>MANTVEADGSNDEGYEAAEEGPEDEEDEKREISAIRSYRDVMKLCAAHLPTESDAPNHYQAVCRALFAETMELHTFLAKVKSAKENLKKIQEMEKSDESSTDLEELKNADWARFWVQVMRDLRNGVKLKKVQERQYNPLPIEYQLTPYEMLMDDIRCKRYTLRKVMVNGDIPPRLKKSAHEIILDFIRSRPPLNPVSARKLKPTPPRPRSLHERILEEIKAERKLRPVSPEEIRRSRLDVTTPESTKNLMESSMVNGGLTSQTKENGLSSAEQVPAQRKKLLKAPTLAELDSSESEEETLHKSTSSSSVSPSFPEEPVLEAVSTRKKPPKFLPISSTPQPERRQPPQRRHSIEKETPTNVRQFLPPSRQSSRSLEEFCYPVECLALTVEEVMHIRQVLVKAELEKYQQYKDIYTALKKGKLCFCCRTRRFSFFTWSYTCQFCKRPVCSQCCKKMRLPSKPYSTLPIFSLGPSALQRGESSMRSEKPSTAHHRPLRSIARFSSKSKSMDKSDEELQFPKELMEDWSTMEVCVDCKKFISEIISSSRRSLVLANKRARLKRKTQSFYMSPPGPSEYCPSERTISEI</sequence>
<dbReference type="EMBL" id="AB169023">
    <property type="protein sequence ID" value="BAE01117.1"/>
    <property type="molecule type" value="mRNA"/>
</dbReference>
<dbReference type="SMR" id="Q4R707"/>
<dbReference type="STRING" id="9541.ENSMFAP00000004287"/>
<dbReference type="Proteomes" id="UP000233100">
    <property type="component" value="Unplaced"/>
</dbReference>
<dbReference type="GO" id="GO:0005938">
    <property type="term" value="C:cell cortex"/>
    <property type="evidence" value="ECO:0000250"/>
    <property type="project" value="UniProtKB"/>
</dbReference>
<dbReference type="GO" id="GO:0032154">
    <property type="term" value="C:cleavage furrow"/>
    <property type="evidence" value="ECO:0007669"/>
    <property type="project" value="UniProtKB-SubCell"/>
</dbReference>
<dbReference type="GO" id="GO:0030659">
    <property type="term" value="C:cytoplasmic vesicle membrane"/>
    <property type="evidence" value="ECO:0000250"/>
    <property type="project" value="UniProtKB"/>
</dbReference>
<dbReference type="GO" id="GO:0005856">
    <property type="term" value="C:cytoskeleton"/>
    <property type="evidence" value="ECO:0007669"/>
    <property type="project" value="UniProtKB-SubCell"/>
</dbReference>
<dbReference type="GO" id="GO:0005829">
    <property type="term" value="C:cytosol"/>
    <property type="evidence" value="ECO:0007669"/>
    <property type="project" value="UniProtKB-SubCell"/>
</dbReference>
<dbReference type="GO" id="GO:0048471">
    <property type="term" value="C:perinuclear region of cytoplasm"/>
    <property type="evidence" value="ECO:0007669"/>
    <property type="project" value="UniProtKB-SubCell"/>
</dbReference>
<dbReference type="GO" id="GO:0003779">
    <property type="term" value="F:actin binding"/>
    <property type="evidence" value="ECO:0007669"/>
    <property type="project" value="UniProtKB-KW"/>
</dbReference>
<dbReference type="GO" id="GO:0008017">
    <property type="term" value="F:microtubule binding"/>
    <property type="evidence" value="ECO:0007669"/>
    <property type="project" value="TreeGrafter"/>
</dbReference>
<dbReference type="GO" id="GO:0030036">
    <property type="term" value="P:actin cytoskeleton organization"/>
    <property type="evidence" value="ECO:0000250"/>
    <property type="project" value="UniProtKB"/>
</dbReference>
<dbReference type="GO" id="GO:0051639">
    <property type="term" value="P:actin filament network formation"/>
    <property type="evidence" value="ECO:0007669"/>
    <property type="project" value="TreeGrafter"/>
</dbReference>
<dbReference type="GO" id="GO:0030041">
    <property type="term" value="P:actin filament polymerization"/>
    <property type="evidence" value="ECO:0007669"/>
    <property type="project" value="TreeGrafter"/>
</dbReference>
<dbReference type="GO" id="GO:0045010">
    <property type="term" value="P:actin nucleation"/>
    <property type="evidence" value="ECO:0007669"/>
    <property type="project" value="InterPro"/>
</dbReference>
<dbReference type="GO" id="GO:0036089">
    <property type="term" value="P:cleavage furrow formation"/>
    <property type="evidence" value="ECO:0000250"/>
    <property type="project" value="UniProtKB"/>
</dbReference>
<dbReference type="GO" id="GO:0051295">
    <property type="term" value="P:establishment of meiotic spindle localization"/>
    <property type="evidence" value="ECO:0000250"/>
    <property type="project" value="UniProtKB"/>
</dbReference>
<dbReference type="GO" id="GO:0070649">
    <property type="term" value="P:formin-nucleated actin cable assembly"/>
    <property type="evidence" value="ECO:0000250"/>
    <property type="project" value="UniProtKB"/>
</dbReference>
<dbReference type="GO" id="GO:0048193">
    <property type="term" value="P:Golgi vesicle transport"/>
    <property type="evidence" value="ECO:0007669"/>
    <property type="project" value="TreeGrafter"/>
</dbReference>
<dbReference type="GO" id="GO:0046907">
    <property type="term" value="P:intracellular transport"/>
    <property type="evidence" value="ECO:0000250"/>
    <property type="project" value="UniProtKB"/>
</dbReference>
<dbReference type="GO" id="GO:0040038">
    <property type="term" value="P:polar body extrusion after meiotic divisions"/>
    <property type="evidence" value="ECO:0000250"/>
    <property type="project" value="UniProtKB"/>
</dbReference>
<dbReference type="GO" id="GO:2000781">
    <property type="term" value="P:positive regulation of double-strand break repair"/>
    <property type="evidence" value="ECO:0000250"/>
    <property type="project" value="UniProtKB"/>
</dbReference>
<dbReference type="GO" id="GO:0015031">
    <property type="term" value="P:protein transport"/>
    <property type="evidence" value="ECO:0007669"/>
    <property type="project" value="UniProtKB-KW"/>
</dbReference>
<dbReference type="GO" id="GO:0016192">
    <property type="term" value="P:vesicle-mediated transport"/>
    <property type="evidence" value="ECO:0000250"/>
    <property type="project" value="UniProtKB"/>
</dbReference>
<dbReference type="CDD" id="cd15767">
    <property type="entry name" value="FYVE_SPIR1"/>
    <property type="match status" value="1"/>
</dbReference>
<dbReference type="CDD" id="cd22186">
    <property type="entry name" value="WH2_Spire1-2_r3"/>
    <property type="match status" value="1"/>
</dbReference>
<dbReference type="CDD" id="cd22078">
    <property type="entry name" value="WH2_Spire1_r2-like"/>
    <property type="match status" value="1"/>
</dbReference>
<dbReference type="CDD" id="cd22065">
    <property type="entry name" value="WH2_Spire_1-2_r1"/>
    <property type="match status" value="1"/>
</dbReference>
<dbReference type="FunFam" id="1.10.510.10:FF:000628">
    <property type="entry name" value="protein spire homolog 1 isoform X1"/>
    <property type="match status" value="1"/>
</dbReference>
<dbReference type="Gene3D" id="1.10.510.10">
    <property type="entry name" value="Transferase(Phosphotransferase) domain 1"/>
    <property type="match status" value="1"/>
</dbReference>
<dbReference type="InterPro" id="IPR011019">
    <property type="entry name" value="KIND_dom"/>
</dbReference>
<dbReference type="InterPro" id="IPR029905">
    <property type="entry name" value="Spir-1_FYVE-rel_dom"/>
</dbReference>
<dbReference type="InterPro" id="IPR029901">
    <property type="entry name" value="Spire"/>
</dbReference>
<dbReference type="InterPro" id="IPR011011">
    <property type="entry name" value="Znf_FYVE_PHD"/>
</dbReference>
<dbReference type="PANTHER" id="PTHR21345:SF8">
    <property type="entry name" value="PROTEIN SPIRE HOMOLOG 1"/>
    <property type="match status" value="1"/>
</dbReference>
<dbReference type="PANTHER" id="PTHR21345">
    <property type="entry name" value="SPIRE"/>
    <property type="match status" value="1"/>
</dbReference>
<dbReference type="Pfam" id="PF16474">
    <property type="entry name" value="KIND"/>
    <property type="match status" value="1"/>
</dbReference>
<dbReference type="SUPFAM" id="SSF57903">
    <property type="entry name" value="FYVE/PHD zinc finger"/>
    <property type="match status" value="1"/>
</dbReference>
<dbReference type="PROSITE" id="PS51377">
    <property type="entry name" value="KIND"/>
    <property type="match status" value="1"/>
</dbReference>
<name>SPIR1_MACFA</name>
<organism>
    <name type="scientific">Macaca fascicularis</name>
    <name type="common">Crab-eating macaque</name>
    <name type="synonym">Cynomolgus monkey</name>
    <dbReference type="NCBI Taxonomy" id="9541"/>
    <lineage>
        <taxon>Eukaryota</taxon>
        <taxon>Metazoa</taxon>
        <taxon>Chordata</taxon>
        <taxon>Craniata</taxon>
        <taxon>Vertebrata</taxon>
        <taxon>Euteleostomi</taxon>
        <taxon>Mammalia</taxon>
        <taxon>Eutheria</taxon>
        <taxon>Euarchontoglires</taxon>
        <taxon>Primates</taxon>
        <taxon>Haplorrhini</taxon>
        <taxon>Catarrhini</taxon>
        <taxon>Cercopithecidae</taxon>
        <taxon>Cercopithecinae</taxon>
        <taxon>Macaca</taxon>
    </lineage>
</organism>
<comment type="function">
    <text evidence="1">Acts as an actin nucleation factor, remains associated with the slow-growing pointed end of the new filament. Involved in intracellular vesicle transport along actin fibers, providing a novel link between actin cytoskeleton dynamics and intracellular transport. Required for asymmetric spindle positioning and asymmetric cell division during meiosis. Required for normal formation of the cleavage furrow and for polar body extrusion during female germ cell meiosis. Also acts in the nucleus: together with FMN2, promotes assembly of nuclear actin filaments in response to DNA damage in order to facilitate movement of chromatin and repair factors after DNA damage. In addition, promotes innate immune signaling downstream of dsRNA sensing. Mechanistically, contributes to IRF3 phosphorylation and activation downstream of MAVS and upstream of TBK1.</text>
</comment>
<comment type="subunit">
    <text evidence="1">Interacts with FMN2.</text>
</comment>
<comment type="subcellular location">
    <subcellularLocation>
        <location evidence="2">Cytoplasm</location>
        <location evidence="2">Cytoskeleton</location>
    </subcellularLocation>
    <subcellularLocation>
        <location evidence="2">Cytoplasm</location>
        <location evidence="2">Cytosol</location>
    </subcellularLocation>
    <subcellularLocation>
        <location evidence="2">Cleavage furrow</location>
    </subcellularLocation>
    <subcellularLocation>
        <location evidence="1">Cytoplasm</location>
        <location evidence="1">Perinuclear region</location>
    </subcellularLocation>
    <subcellularLocation>
        <location evidence="2">Cell membrane</location>
        <topology evidence="2">Peripheral membrane protein</topology>
        <orientation evidence="2">Cytoplasmic side</orientation>
    </subcellularLocation>
    <subcellularLocation>
        <location evidence="2">Cytoplasmic vesicle membrane</location>
        <topology evidence="2">Peripheral membrane protein</topology>
        <orientation evidence="2">Cytoplasmic side</orientation>
    </subcellularLocation>
    <text evidence="2">Punctate spots in perinuclear region and cytoplasm, co-localized with Rab11. Detected at the cleavage furrow during asymmetric oocyte division and polar body extrusion.</text>
</comment>
<comment type="domain">
    <text evidence="3">Binds to actin monomers via the WH2 domain.</text>
</comment>
<comment type="domain">
    <text evidence="1">The Spir-box targets binding to intracellular membrane structures.</text>
</comment>
<comment type="similarity">
    <text evidence="7">Belongs to the spire family.</text>
</comment>
<gene>
    <name type="primary">SPIRE1</name>
    <name type="ORF">QtsA-16668</name>
</gene>